<dbReference type="EMBL" id="X67705">
    <property type="protein sequence ID" value="CAA47943.1"/>
    <property type="molecule type" value="Genomic_DNA"/>
</dbReference>
<dbReference type="EMBL" id="Z47071">
    <property type="protein sequence ID" value="CAA87364.1"/>
    <property type="molecule type" value="Genomic_DNA"/>
</dbReference>
<dbReference type="EMBL" id="AY558418">
    <property type="protein sequence ID" value="AAS56744.1"/>
    <property type="molecule type" value="Genomic_DNA"/>
</dbReference>
<dbReference type="EMBL" id="BK006946">
    <property type="protein sequence ID" value="DAA10045.1"/>
    <property type="molecule type" value="Genomic_DNA"/>
</dbReference>
<dbReference type="PIR" id="S28416">
    <property type="entry name" value="S28416"/>
</dbReference>
<dbReference type="RefSeq" id="NP_013869.1">
    <property type="nucleotide sequence ID" value="NM_001182651.1"/>
</dbReference>
<dbReference type="PDB" id="6C26">
    <property type="method" value="EM"/>
    <property type="resolution" value="3.50 A"/>
    <property type="chains" value="C=1-286"/>
</dbReference>
<dbReference type="PDB" id="6EZN">
    <property type="method" value="EM"/>
    <property type="resolution" value="3.30 A"/>
    <property type="chains" value="H=1-286"/>
</dbReference>
<dbReference type="PDB" id="7OCI">
    <property type="method" value="EM"/>
    <property type="resolution" value="3.46 A"/>
    <property type="chains" value="H=1-286"/>
</dbReference>
<dbReference type="PDB" id="8AGB">
    <property type="method" value="EM"/>
    <property type="resolution" value="3.00 A"/>
    <property type="chains" value="F=1-283"/>
</dbReference>
<dbReference type="PDB" id="8AGC">
    <property type="method" value="EM"/>
    <property type="resolution" value="3.10 A"/>
    <property type="chains" value="F=1-283"/>
</dbReference>
<dbReference type="PDB" id="8AGE">
    <property type="method" value="EM"/>
    <property type="resolution" value="2.80 A"/>
    <property type="chains" value="F=1-283"/>
</dbReference>
<dbReference type="PDBsum" id="6C26"/>
<dbReference type="PDBsum" id="6EZN"/>
<dbReference type="PDBsum" id="7OCI"/>
<dbReference type="PDBsum" id="8AGB"/>
<dbReference type="PDBsum" id="8AGC"/>
<dbReference type="PDBsum" id="8AGE"/>
<dbReference type="EMDB" id="EMD-12808"/>
<dbReference type="EMDB" id="EMD-15419"/>
<dbReference type="EMDB" id="EMD-4161"/>
<dbReference type="EMDB" id="EMD-7336"/>
<dbReference type="SMR" id="Q02795"/>
<dbReference type="BioGRID" id="35325">
    <property type="interactions" value="307"/>
</dbReference>
<dbReference type="ComplexPortal" id="CPX-1638">
    <property type="entry name" value="Oligosaccharyltransferase complex, OST6 variant"/>
</dbReference>
<dbReference type="ComplexPortal" id="CPX-1639">
    <property type="entry name" value="Oligosaccharyltransferase complex, OST3 variant"/>
</dbReference>
<dbReference type="DIP" id="DIP-2460N"/>
<dbReference type="FunCoup" id="Q02795">
    <property type="interactions" value="205"/>
</dbReference>
<dbReference type="IntAct" id="Q02795">
    <property type="interactions" value="62"/>
</dbReference>
<dbReference type="MINT" id="Q02795"/>
<dbReference type="STRING" id="4932.YMR149W"/>
<dbReference type="TCDB" id="9.B.142.3.14">
    <property type="family name" value="the integral membrane glycosyltransferase family 39 (gt39) family"/>
</dbReference>
<dbReference type="PaxDb" id="4932-YMR149W"/>
<dbReference type="PeptideAtlas" id="Q02795"/>
<dbReference type="TopDownProteomics" id="Q02795"/>
<dbReference type="EnsemblFungi" id="YMR149W_mRNA">
    <property type="protein sequence ID" value="YMR149W"/>
    <property type="gene ID" value="YMR149W"/>
</dbReference>
<dbReference type="GeneID" id="855180"/>
<dbReference type="KEGG" id="sce:YMR149W"/>
<dbReference type="AGR" id="SGD:S000004757"/>
<dbReference type="SGD" id="S000004757">
    <property type="gene designation" value="SWP1"/>
</dbReference>
<dbReference type="VEuPathDB" id="FungiDB:YMR149W"/>
<dbReference type="eggNOG" id="KOG2447">
    <property type="taxonomic scope" value="Eukaryota"/>
</dbReference>
<dbReference type="HOGENOM" id="CLU_079423_0_0_1"/>
<dbReference type="InParanoid" id="Q02795"/>
<dbReference type="OMA" id="SIVTHYV"/>
<dbReference type="OrthoDB" id="432292at2759"/>
<dbReference type="BioCyc" id="MetaCyc:YMR149W-MONOMER"/>
<dbReference type="BioCyc" id="YEAST:YMR149W-MONOMER"/>
<dbReference type="BRENDA" id="2.4.99.18">
    <property type="organism ID" value="984"/>
</dbReference>
<dbReference type="UniPathway" id="UPA00378"/>
<dbReference type="BioGRID-ORCS" id="855180">
    <property type="hits" value="6 hits in 10 CRISPR screens"/>
</dbReference>
<dbReference type="PRO" id="PR:Q02795"/>
<dbReference type="Proteomes" id="UP000002311">
    <property type="component" value="Chromosome XIII"/>
</dbReference>
<dbReference type="RNAct" id="Q02795">
    <property type="molecule type" value="protein"/>
</dbReference>
<dbReference type="GO" id="GO:0005789">
    <property type="term" value="C:endoplasmic reticulum membrane"/>
    <property type="evidence" value="ECO:0000314"/>
    <property type="project" value="SGD"/>
</dbReference>
<dbReference type="GO" id="GO:0008250">
    <property type="term" value="C:oligosaccharyltransferase complex"/>
    <property type="evidence" value="ECO:0000314"/>
    <property type="project" value="SGD"/>
</dbReference>
<dbReference type="GO" id="GO:0005198">
    <property type="term" value="F:structural molecule activity"/>
    <property type="evidence" value="ECO:0000314"/>
    <property type="project" value="SGD"/>
</dbReference>
<dbReference type="GO" id="GO:0006487">
    <property type="term" value="P:protein N-linked glycosylation"/>
    <property type="evidence" value="ECO:0000314"/>
    <property type="project" value="SGD"/>
</dbReference>
<dbReference type="InterPro" id="IPR056790">
    <property type="entry name" value="Ribophorin_II_C"/>
</dbReference>
<dbReference type="InterPro" id="IPR008814">
    <property type="entry name" value="Swp1"/>
</dbReference>
<dbReference type="PANTHER" id="PTHR12640:SF0">
    <property type="entry name" value="DOLICHYL-DIPHOSPHOOLIGOSACCHARIDE--PROTEIN GLYCOSYLTRANSFERASE SUBUNIT 2"/>
    <property type="match status" value="1"/>
</dbReference>
<dbReference type="PANTHER" id="PTHR12640">
    <property type="entry name" value="RIBOPHORIN II"/>
    <property type="match status" value="1"/>
</dbReference>
<dbReference type="Pfam" id="PF25147">
    <property type="entry name" value="Ribophorin_II_C"/>
    <property type="match status" value="1"/>
</dbReference>
<proteinExistence type="evidence at protein level"/>
<sequence length="286" mass="31653">MQFFKTLAALVSCISFVLAYVAQDVHVSFPSTAGKSRVMIGKVEPRIGIDETVPTTITVEDPNEVIQVNFAIESTNKPFQNTLLIGLPNKNLEMAFEPEIKDNGKLSMYKYRIDLAKLDAALLQEASRSPEPIKATLILASSTAKPKENLFREILQLNLNFDVDHSDSSLVDKFGIKPEIHHIFHAEPKRVAKPIAVIFVLIIFITILSLIVTWLNSCAAAFNNIPTGVTAVYFLGFIATIVGFEVIFARYYLGTSIFETLFSSLYLGAPGLLTSTKFLRSFGQTI</sequence>
<evidence type="ECO:0000269" key="1">
    <source>
    </source>
</evidence>
<evidence type="ECO:0000269" key="2">
    <source>
    </source>
</evidence>
<evidence type="ECO:0000269" key="3">
    <source>
    </source>
</evidence>
<evidence type="ECO:0000269" key="4">
    <source>
    </source>
</evidence>
<evidence type="ECO:0000269" key="5">
    <source>
    </source>
</evidence>
<evidence type="ECO:0000269" key="6">
    <source>
    </source>
</evidence>
<evidence type="ECO:0000269" key="7">
    <source>
    </source>
</evidence>
<evidence type="ECO:0000269" key="8">
    <source>
    </source>
</evidence>
<evidence type="ECO:0000269" key="9">
    <source>
    </source>
</evidence>
<evidence type="ECO:0000269" key="10">
    <source>
    </source>
</evidence>
<evidence type="ECO:0000269" key="11">
    <source>
    </source>
</evidence>
<evidence type="ECO:0000269" key="12">
    <source>
    </source>
</evidence>
<evidence type="ECO:0000305" key="13"/>
<evidence type="ECO:0000305" key="14">
    <source>
    </source>
</evidence>
<evidence type="ECO:0000305" key="15">
    <source>
    </source>
</evidence>
<evidence type="ECO:0007829" key="16">
    <source>
        <dbReference type="PDB" id="6C26"/>
    </source>
</evidence>
<evidence type="ECO:0007829" key="17">
    <source>
        <dbReference type="PDB" id="6EZN"/>
    </source>
</evidence>
<evidence type="ECO:0007829" key="18">
    <source>
        <dbReference type="PDB" id="7OCI"/>
    </source>
</evidence>
<evidence type="ECO:0007829" key="19">
    <source>
        <dbReference type="PDB" id="8AGE"/>
    </source>
</evidence>
<gene>
    <name type="primary">SWP1</name>
    <name type="ordered locus">YMR149W</name>
    <name type="ORF">YM9375.19</name>
</gene>
<reference key="1">
    <citation type="journal article" date="1993" name="EMBO J.">
        <title>Yeast Wbp1p and Swp1p form a protein complex essential for oligosaccharyl transferase activity.</title>
        <authorList>
            <person name="Te Heesen S."/>
            <person name="Knauer R."/>
            <person name="Lehle L."/>
            <person name="Aebi M."/>
        </authorList>
    </citation>
    <scope>NUCLEOTIDE SEQUENCE [GENOMIC DNA]</scope>
</reference>
<reference key="2">
    <citation type="journal article" date="1997" name="Nature">
        <title>The nucleotide sequence of Saccharomyces cerevisiae chromosome XIII.</title>
        <authorList>
            <person name="Bowman S."/>
            <person name="Churcher C.M."/>
            <person name="Badcock K."/>
            <person name="Brown D."/>
            <person name="Chillingworth T."/>
            <person name="Connor R."/>
            <person name="Dedman K."/>
            <person name="Devlin K."/>
            <person name="Gentles S."/>
            <person name="Hamlin N."/>
            <person name="Hunt S."/>
            <person name="Jagels K."/>
            <person name="Lye G."/>
            <person name="Moule S."/>
            <person name="Odell C."/>
            <person name="Pearson D."/>
            <person name="Rajandream M.A."/>
            <person name="Rice P."/>
            <person name="Skelton J."/>
            <person name="Walsh S.V."/>
            <person name="Whitehead S."/>
            <person name="Barrell B.G."/>
        </authorList>
    </citation>
    <scope>NUCLEOTIDE SEQUENCE [LARGE SCALE GENOMIC DNA]</scope>
    <source>
        <strain>ATCC 204508 / S288c</strain>
    </source>
</reference>
<reference key="3">
    <citation type="journal article" date="2014" name="G3 (Bethesda)">
        <title>The reference genome sequence of Saccharomyces cerevisiae: Then and now.</title>
        <authorList>
            <person name="Engel S.R."/>
            <person name="Dietrich F.S."/>
            <person name="Fisk D.G."/>
            <person name="Binkley G."/>
            <person name="Balakrishnan R."/>
            <person name="Costanzo M.C."/>
            <person name="Dwight S.S."/>
            <person name="Hitz B.C."/>
            <person name="Karra K."/>
            <person name="Nash R.S."/>
            <person name="Weng S."/>
            <person name="Wong E.D."/>
            <person name="Lloyd P."/>
            <person name="Skrzypek M.S."/>
            <person name="Miyasato S.R."/>
            <person name="Simison M."/>
            <person name="Cherry J.M."/>
        </authorList>
    </citation>
    <scope>GENOME REANNOTATION</scope>
    <source>
        <strain>ATCC 204508 / S288c</strain>
    </source>
</reference>
<reference key="4">
    <citation type="journal article" date="2007" name="Genome Res.">
        <title>Approaching a complete repository of sequence-verified protein-encoding clones for Saccharomyces cerevisiae.</title>
        <authorList>
            <person name="Hu Y."/>
            <person name="Rolfs A."/>
            <person name="Bhullar B."/>
            <person name="Murthy T.V.S."/>
            <person name="Zhu C."/>
            <person name="Berger M.F."/>
            <person name="Camargo A.A."/>
            <person name="Kelley F."/>
            <person name="McCarron S."/>
            <person name="Jepson D."/>
            <person name="Richardson A."/>
            <person name="Raphael J."/>
            <person name="Moreira D."/>
            <person name="Taycher E."/>
            <person name="Zuo D."/>
            <person name="Mohr S."/>
            <person name="Kane M.F."/>
            <person name="Williamson J."/>
            <person name="Simpson A.J.G."/>
            <person name="Bulyk M.L."/>
            <person name="Harlow E."/>
            <person name="Marsischky G."/>
            <person name="Kolodner R.D."/>
            <person name="LaBaer J."/>
        </authorList>
    </citation>
    <scope>NUCLEOTIDE SEQUENCE [GENOMIC DNA]</scope>
    <source>
        <strain>ATCC 204508 / S288c</strain>
    </source>
</reference>
<reference key="5">
    <citation type="journal article" date="1994" name="J. Biol. Chem.">
        <title>The Saccharomyces cerevisiae oligosaccharyltransferase is a protein complex composed of Wbp1p, Swp1p, and four additional polypeptides.</title>
        <authorList>
            <person name="Kelleher D.J."/>
            <person name="Gilmore R."/>
        </authorList>
    </citation>
    <scope>PROTEIN SEQUENCE OF 20-35</scope>
    <scope>IDENTIFICATION IN THE OLIGOSACCHARYL TRANSFERASE COMPLEX</scope>
</reference>
<reference key="6">
    <citation type="journal article" date="1995" name="Biochemistry">
        <title>Sulfhydryl modification of the yeast Wbp1p inhibits oligosaccharyl transferase activity.</title>
        <authorList>
            <person name="Pathak R."/>
            <person name="Hendrickson T.L."/>
            <person name="Imperiali B."/>
        </authorList>
    </citation>
    <scope>PROTEIN SEQUENCE OF 20-26</scope>
</reference>
<reference key="7">
    <citation type="journal article" date="1994" name="FEBS Lett.">
        <title>The N-oligosaccharyltransferase complex from yeast.</title>
        <authorList>
            <person name="Knauer R."/>
            <person name="Lehle L."/>
        </authorList>
    </citation>
    <scope>SUBCELLULAR LOCATION</scope>
</reference>
<reference key="8">
    <citation type="journal article" date="1997" name="J. Biol. Chem.">
        <title>The highly conserved Stt3 protein is a subunit of the yeast oligosaccharyltransferase and forms a subcomplex with Ost3p and Ost4p.</title>
        <authorList>
            <person name="Karaoglu D."/>
            <person name="Kelleher D.J."/>
            <person name="Gilmore R."/>
        </authorList>
    </citation>
    <scope>IDENTIFICATION IN THE OLIGOSACCHARYL TRANSFERASE COMPLEX</scope>
</reference>
<reference key="9">
    <citation type="journal article" date="1999" name="Biochim. Biophys. Acta">
        <title>The oligosaccharyltransferase complex from yeast.</title>
        <authorList>
            <person name="Knauer R."/>
            <person name="Lehle L."/>
        </authorList>
    </citation>
    <scope>REVIEW ON OLIGOSACCHARYL TRANSFERASE</scope>
</reference>
<reference key="10">
    <citation type="journal article" date="2001" name="Biochemistry">
        <title>Allosteric regulation provides a molecular mechanism for preferential utilization of the fully assembled dolichol-linked oligosaccharide by the yeast oligosaccharyltransferase.</title>
        <authorList>
            <person name="Karaoglu D."/>
            <person name="Kelleher D.J."/>
            <person name="Gilmore R."/>
        </authorList>
    </citation>
    <scope>FUNCTION</scope>
</reference>
<reference key="11">
    <citation type="journal article" date="2003" name="Nature">
        <title>Global analysis of protein localization in budding yeast.</title>
        <authorList>
            <person name="Huh W.-K."/>
            <person name="Falvo J.V."/>
            <person name="Gerke L.C."/>
            <person name="Carroll A.S."/>
            <person name="Howson R.W."/>
            <person name="Weissman J.S."/>
            <person name="O'Shea E.K."/>
        </authorList>
    </citation>
    <scope>SUBCELLULAR LOCATION [LARGE SCALE ANALYSIS]</scope>
</reference>
<reference key="12">
    <citation type="journal article" date="2003" name="Nature">
        <title>Global analysis of protein expression in yeast.</title>
        <authorList>
            <person name="Ghaemmaghami S."/>
            <person name="Huh W.-K."/>
            <person name="Bower K."/>
            <person name="Howson R.W."/>
            <person name="Belle A."/>
            <person name="Dephoure N."/>
            <person name="O'Shea E.K."/>
            <person name="Weissman J.S."/>
        </authorList>
    </citation>
    <scope>LEVEL OF PROTEIN EXPRESSION [LARGE SCALE ANALYSIS]</scope>
</reference>
<reference key="13">
    <citation type="journal article" date="2005" name="FEBS Lett.">
        <title>Yeast oligosaccharyltransferase consists of two functionally distinct sub-complexes, specified by either the Ost3p or Ost6p subunit.</title>
        <authorList>
            <person name="Schwarz M."/>
            <person name="Knauer R."/>
            <person name="Lehle L."/>
        </authorList>
    </citation>
    <scope>COMPOSITION OF OLIGOSACCHARYL TRANSFERASE COMPLEXES</scope>
</reference>
<reference key="14">
    <citation type="journal article" date="2005" name="Glycobiology">
        <title>The 3.4-kDa Ost4 protein is required for the assembly of two distinct oligosaccharyltransferase complexes in yeast.</title>
        <authorList>
            <person name="Spirig U."/>
            <person name="Bodmer D."/>
            <person name="Wacker M."/>
            <person name="Burda P."/>
            <person name="Aebi M."/>
        </authorList>
    </citation>
    <scope>COMPOSITION OF OLIGOSACCHARYL TRANSFERASE COMPLEXES</scope>
</reference>
<reference key="15">
    <citation type="journal article" date="2005" name="Glycobiology">
        <title>Two oligosaccharyl transferase complexes exist in yeast and associate with two different translocons.</title>
        <authorList>
            <person name="Yan A."/>
            <person name="Lennarz W.J."/>
        </authorList>
    </citation>
    <scope>COMPOSITION OF OLIGOSACCHARYL TRANSFERASE COMPLEXES</scope>
</reference>
<reference key="16">
    <citation type="journal article" date="2005" name="J. Biol. Chem.">
        <title>Subunits of the translocon interact with components of the oligosaccharyl transferase complex.</title>
        <authorList>
            <person name="Chavan M."/>
            <person name="Yan A."/>
            <person name="Lennarz W.J."/>
        </authorList>
    </citation>
    <scope>INTERACTION WITH SSS1 AND SEC61</scope>
</reference>
<reference key="17">
    <citation type="journal article" date="2005" name="Proc. Natl. Acad. Sci. U.S.A.">
        <title>Studies of yeast oligosaccharyl transferase subunits using the split-ubiquitin system: topological features and in vivo interactions.</title>
        <authorList>
            <person name="Yan A."/>
            <person name="Wu E."/>
            <person name="Lennarz W.J."/>
        </authorList>
    </citation>
    <scope>TOPOLOGY</scope>
    <scope>INTERACTION WITH OST1; OST2; OST4; STT3 AND WBP1</scope>
</reference>
<reference key="18">
    <citation type="journal article" date="2018" name="Nature">
        <title>The atomic structure of a eukaryotic oligosaccharyltransferase complex.</title>
        <authorList>
            <person name="Bai L."/>
            <person name="Wang T."/>
            <person name="Zhao G."/>
            <person name="Kovach A."/>
            <person name="Li H."/>
        </authorList>
    </citation>
    <scope>STRUCTURE BY ELECTRON MICROSCOPY (3.50 ANGSTROMS) OF 1-286</scope>
</reference>
<reference key="19">
    <citation type="journal article" date="2018" name="Science">
        <title>Structure of the yeast oligosaccharyltransferase complex gives insight into eukaryotic N-glycosylation.</title>
        <authorList>
            <person name="Wild R."/>
            <person name="Kowal J."/>
            <person name="Eyring J."/>
            <person name="Ngwa E.M."/>
            <person name="Aebi M."/>
            <person name="Locher K.P."/>
        </authorList>
    </citation>
    <scope>STRUCTURE BY ELECTRON MICROSCOPY (3.30 ANGSTROMS) OF 1-286</scope>
</reference>
<organism>
    <name type="scientific">Saccharomyces cerevisiae (strain ATCC 204508 / S288c)</name>
    <name type="common">Baker's yeast</name>
    <dbReference type="NCBI Taxonomy" id="559292"/>
    <lineage>
        <taxon>Eukaryota</taxon>
        <taxon>Fungi</taxon>
        <taxon>Dikarya</taxon>
        <taxon>Ascomycota</taxon>
        <taxon>Saccharomycotina</taxon>
        <taxon>Saccharomycetes</taxon>
        <taxon>Saccharomycetales</taxon>
        <taxon>Saccharomycetaceae</taxon>
        <taxon>Saccharomyces</taxon>
    </lineage>
</organism>
<accession>Q02795</accession>
<accession>D6VZX1</accession>
<keyword id="KW-0002">3D-structure</keyword>
<keyword id="KW-0903">Direct protein sequencing</keyword>
<keyword id="KW-0256">Endoplasmic reticulum</keyword>
<keyword id="KW-0472">Membrane</keyword>
<keyword id="KW-1185">Reference proteome</keyword>
<keyword id="KW-0732">Signal</keyword>
<keyword id="KW-0812">Transmembrane</keyword>
<keyword id="KW-1133">Transmembrane helix</keyword>
<comment type="function">
    <text evidence="1">Subunit of the oligosaccharyl transferase (OST) complex that catalyzes the initial transfer of a defined glycan (Glc(3)Man(9)GlcNAc(2) in eukaryotes) from the lipid carrier dolichol-pyrophosphate to an asparagine residue within an Asn-X-Ser/Thr consensus motif in nascent polypeptide chains, the first step in protein N-glycosylation. N-glycosylation occurs cotranslationally and the complex associates with the Sec61 complex at the channel-forming translocon complex that mediates protein translocation across the endoplasmic reticulum (ER). All subunits are required for a maximal enzyme activity.</text>
</comment>
<comment type="pathway">
    <text evidence="15">Protein modification; protein glycosylation.</text>
</comment>
<comment type="subunit">
    <text evidence="4 5 6 7 8 10 12">Component of the oligosaccharyltransferase (OST) complex, which appears to exist in two assemblies comprising OST1, OST2, OST4, OST5, STT3, SWP1, WPB1, and either OST3 or OST6 (PubMed:15831493, PubMed:15886282, PubMed:16096345, PubMed:16297388, PubMed:29301962, PubMed:8175708, PubMed:9405463). OST assembly occurs through the formation of 3 subcomplexes. Subcomplex 1 contains OST1 and OST5, subcomplex 2 contains STT3, OST3, and OST4, and subcomplex 3 contains OST2, WBP1, and SWP1 (PubMed:29301962). Interacts with SEC61 and SSS1 (PubMed:15831493).</text>
</comment>
<comment type="interaction">
    <interactant intactId="EBI-12666">
        <id>Q02795</id>
    </interactant>
    <interactant intactId="EBI-12651">
        <id>P41543</id>
        <label>OST1</label>
    </interactant>
    <organismsDiffer>false</organismsDiffer>
    <experiments>4</experiments>
</comment>
<comment type="interaction">
    <interactant intactId="EBI-12666">
        <id>Q02795</id>
    </interactant>
    <interactant intactId="EBI-12689">
        <id>Q99380</id>
        <label>OST4</label>
    </interactant>
    <organismsDiffer>false</organismsDiffer>
    <experiments>7</experiments>
</comment>
<comment type="interaction">
    <interactant intactId="EBI-12666">
        <id>Q02795</id>
    </interactant>
    <interactant intactId="EBI-16400">
        <id>P32915</id>
        <label>SEC61</label>
    </interactant>
    <organismsDiffer>false</organismsDiffer>
    <experiments>3</experiments>
</comment>
<comment type="interaction">
    <interactant intactId="EBI-12666">
        <id>Q02795</id>
    </interactant>
    <interactant intactId="EBI-16406">
        <id>P35179</id>
        <label>SSS1</label>
    </interactant>
    <organismsDiffer>false</organismsDiffer>
    <experiments>2</experiments>
</comment>
<comment type="interaction">
    <interactant intactId="EBI-12666">
        <id>Q02795</id>
    </interactant>
    <interactant intactId="EBI-12658">
        <id>P33767</id>
        <label>WBP1</label>
    </interactant>
    <organismsDiffer>false</organismsDiffer>
    <experiments>4</experiments>
</comment>
<comment type="subcellular location">
    <subcellularLocation>
        <location evidence="2 11">Endoplasmic reticulum membrane</location>
        <topology evidence="8">Multi-pass membrane protein</topology>
    </subcellularLocation>
</comment>
<comment type="miscellaneous">
    <text evidence="3">Present with 8450 molecules/cell in log phase SD medium.</text>
</comment>
<comment type="similarity">
    <text evidence="13">Belongs to the SWP1 family.</text>
</comment>
<protein>
    <recommendedName>
        <fullName>Dolichyl-diphosphooligosaccharide--protein glycosyltransferase subunit SWP1</fullName>
        <shortName>Oligosaccharyl transferase subunit SWP1</shortName>
    </recommendedName>
    <alternativeName>
        <fullName>Oligosaccharyl transferase subunit delta</fullName>
    </alternativeName>
</protein>
<feature type="signal peptide" evidence="9 10">
    <location>
        <begin position="1"/>
        <end position="19"/>
    </location>
</feature>
<feature type="chain" id="PRO_0000021962" description="Dolichyl-diphosphooligosaccharide--protein glycosyltransferase subunit SWP1">
    <location>
        <begin position="20"/>
        <end position="286"/>
    </location>
</feature>
<feature type="topological domain" description="Lumenal" evidence="14">
    <location>
        <begin position="20"/>
        <end position="194"/>
    </location>
</feature>
<feature type="transmembrane region" description="Helical" evidence="8">
    <location>
        <begin position="195"/>
        <end position="215"/>
    </location>
</feature>
<feature type="topological domain" description="Cytoplasmic" evidence="13">
    <location>
        <begin position="216"/>
        <end position="228"/>
    </location>
</feature>
<feature type="transmembrane region" description="Helical" evidence="8">
    <location>
        <begin position="229"/>
        <end position="249"/>
    </location>
</feature>
<feature type="topological domain" description="Lumenal" evidence="13">
    <location>
        <begin position="250"/>
        <end position="252"/>
    </location>
</feature>
<feature type="transmembrane region" description="Helical" evidence="8">
    <location>
        <begin position="253"/>
        <end position="273"/>
    </location>
</feature>
<feature type="topological domain" description="Cytoplasmic" evidence="13">
    <location>
        <begin position="274"/>
        <end position="286"/>
    </location>
</feature>
<feature type="strand" evidence="16">
    <location>
        <begin position="25"/>
        <end position="27"/>
    </location>
</feature>
<feature type="strand" evidence="19">
    <location>
        <begin position="28"/>
        <end position="35"/>
    </location>
</feature>
<feature type="strand" evidence="17">
    <location>
        <begin position="68"/>
        <end position="70"/>
    </location>
</feature>
<feature type="strand" evidence="19">
    <location>
        <begin position="79"/>
        <end position="87"/>
    </location>
</feature>
<feature type="turn" evidence="19">
    <location>
        <begin position="88"/>
        <end position="91"/>
    </location>
</feature>
<feature type="strand" evidence="18">
    <location>
        <begin position="92"/>
        <end position="96"/>
    </location>
</feature>
<feature type="strand" evidence="19">
    <location>
        <begin position="100"/>
        <end position="102"/>
    </location>
</feature>
<feature type="strand" evidence="19">
    <location>
        <begin position="104"/>
        <end position="115"/>
    </location>
</feature>
<feature type="helix" evidence="19">
    <location>
        <begin position="120"/>
        <end position="128"/>
    </location>
</feature>
<feature type="strand" evidence="19">
    <location>
        <begin position="133"/>
        <end position="140"/>
    </location>
</feature>
<feature type="strand" evidence="19">
    <location>
        <begin position="142"/>
        <end position="144"/>
    </location>
</feature>
<feature type="strand" evidence="16">
    <location>
        <begin position="146"/>
        <end position="148"/>
    </location>
</feature>
<feature type="strand" evidence="19">
    <location>
        <begin position="149"/>
        <end position="157"/>
    </location>
</feature>
<feature type="strand" evidence="19">
    <location>
        <begin position="166"/>
        <end position="171"/>
    </location>
</feature>
<feature type="turn" evidence="19">
    <location>
        <begin position="172"/>
        <end position="174"/>
    </location>
</feature>
<feature type="helix" evidence="19">
    <location>
        <begin position="193"/>
        <end position="216"/>
    </location>
</feature>
<feature type="helix" evidence="19">
    <location>
        <begin position="230"/>
        <end position="253"/>
    </location>
</feature>
<feature type="helix" evidence="19">
    <location>
        <begin position="257"/>
        <end position="281"/>
    </location>
</feature>
<name>OSTD_YEAST</name>